<evidence type="ECO:0000255" key="1">
    <source>
        <dbReference type="HAMAP-Rule" id="MF_01030"/>
    </source>
</evidence>
<name>SDHD_BACC3</name>
<sequence length="446" mass="49596">MKEIEKLKEEYPLLNKLIETEEVLWVNPNMEKYETAIKDSPLSEENVKDAKERLKRFASYIAKVFPETKETKGIIESPLLKIPSMKQALEKNYEQPILGELLLKCDSHLPISGSIKARGGIYEVLKHAEQLALQHGMLTEEDDYSILDSDTCREFFAKYSIAVGSTGNLGLSIGIMSAKLGFNVTVHMSADAKQWKKDLLRSKGVNVIEYEADYSKAVEEGRRQADADPSCYFVDDENSHDLFLGYAVAASRLQKQLEELEIIVDEEHPLFVYLPCGVGGGPGGVAFGLKLLYKDNVHCFFAEPTHSPCMLIGLMTGLHDKIAVQDIGIDNVTDADGLAVGRPSGFVGKTMEPFLSGDYTVSDEELYRLLKELADTENIYLEPSALAGMIGPVRVCKEDAYLQKQQLMEKMQKGTHIVWGTGGSMVPEDVMNGYYKTGEALTILEK</sequence>
<dbReference type="EC" id="4.3.1.18" evidence="1"/>
<dbReference type="EMBL" id="CP001407">
    <property type="protein sequence ID" value="ACO29992.1"/>
    <property type="molecule type" value="Genomic_DNA"/>
</dbReference>
<dbReference type="RefSeq" id="WP_000658357.1">
    <property type="nucleotide sequence ID" value="NZ_CP009318.1"/>
</dbReference>
<dbReference type="SMR" id="C1EPF1"/>
<dbReference type="KEGG" id="bcx:BCA_1793"/>
<dbReference type="PATRIC" id="fig|572264.18.peg.1735"/>
<dbReference type="Proteomes" id="UP000002210">
    <property type="component" value="Chromosome"/>
</dbReference>
<dbReference type="GO" id="GO:0008721">
    <property type="term" value="F:D-serine ammonia-lyase activity"/>
    <property type="evidence" value="ECO:0007669"/>
    <property type="project" value="UniProtKB-EC"/>
</dbReference>
<dbReference type="GO" id="GO:0016836">
    <property type="term" value="F:hydro-lyase activity"/>
    <property type="evidence" value="ECO:0007669"/>
    <property type="project" value="UniProtKB-UniRule"/>
</dbReference>
<dbReference type="GO" id="GO:0030170">
    <property type="term" value="F:pyridoxal phosphate binding"/>
    <property type="evidence" value="ECO:0007669"/>
    <property type="project" value="InterPro"/>
</dbReference>
<dbReference type="GO" id="GO:0036088">
    <property type="term" value="P:D-serine catabolic process"/>
    <property type="evidence" value="ECO:0007669"/>
    <property type="project" value="TreeGrafter"/>
</dbReference>
<dbReference type="GO" id="GO:0009097">
    <property type="term" value="P:isoleucine biosynthetic process"/>
    <property type="evidence" value="ECO:0007669"/>
    <property type="project" value="TreeGrafter"/>
</dbReference>
<dbReference type="CDD" id="cd06447">
    <property type="entry name" value="D-Ser-dehyd"/>
    <property type="match status" value="1"/>
</dbReference>
<dbReference type="FunFam" id="3.40.50.1100:FF:000018">
    <property type="entry name" value="D-serine dehydratase"/>
    <property type="match status" value="1"/>
</dbReference>
<dbReference type="Gene3D" id="3.40.50.1100">
    <property type="match status" value="2"/>
</dbReference>
<dbReference type="HAMAP" id="MF_01030">
    <property type="entry name" value="D_Ser_dehydrat"/>
    <property type="match status" value="1"/>
</dbReference>
<dbReference type="InterPro" id="IPR011780">
    <property type="entry name" value="D_Ser_am_lyase"/>
</dbReference>
<dbReference type="InterPro" id="IPR050147">
    <property type="entry name" value="Ser/Thr_Dehydratase"/>
</dbReference>
<dbReference type="InterPro" id="IPR000634">
    <property type="entry name" value="Ser/Thr_deHydtase_PyrdxlP-BS"/>
</dbReference>
<dbReference type="InterPro" id="IPR001926">
    <property type="entry name" value="TrpB-like_PALP"/>
</dbReference>
<dbReference type="InterPro" id="IPR036052">
    <property type="entry name" value="TrpB-like_PALP_sf"/>
</dbReference>
<dbReference type="NCBIfam" id="TIGR02035">
    <property type="entry name" value="D_Ser_am_lyase"/>
    <property type="match status" value="1"/>
</dbReference>
<dbReference type="NCBIfam" id="NF002823">
    <property type="entry name" value="PRK02991.1"/>
    <property type="match status" value="1"/>
</dbReference>
<dbReference type="PANTHER" id="PTHR48078:SF9">
    <property type="entry name" value="D-SERINE DEHYDRATASE"/>
    <property type="match status" value="1"/>
</dbReference>
<dbReference type="PANTHER" id="PTHR48078">
    <property type="entry name" value="THREONINE DEHYDRATASE, MITOCHONDRIAL-RELATED"/>
    <property type="match status" value="1"/>
</dbReference>
<dbReference type="Pfam" id="PF00291">
    <property type="entry name" value="PALP"/>
    <property type="match status" value="1"/>
</dbReference>
<dbReference type="SUPFAM" id="SSF53686">
    <property type="entry name" value="Tryptophan synthase beta subunit-like PLP-dependent enzymes"/>
    <property type="match status" value="1"/>
</dbReference>
<dbReference type="PROSITE" id="PS00165">
    <property type="entry name" value="DEHYDRATASE_SER_THR"/>
    <property type="match status" value="1"/>
</dbReference>
<proteinExistence type="inferred from homology"/>
<keyword id="KW-0456">Lyase</keyword>
<keyword id="KW-0663">Pyridoxal phosphate</keyword>
<accession>C1EPF1</accession>
<protein>
    <recommendedName>
        <fullName evidence="1">Probable D-serine dehydratase</fullName>
        <ecNumber evidence="1">4.3.1.18</ecNumber>
    </recommendedName>
    <alternativeName>
        <fullName evidence="1">D-serine deaminase</fullName>
        <shortName evidence="1">DSD</shortName>
    </alternativeName>
</protein>
<organism>
    <name type="scientific">Bacillus cereus (strain 03BB102)</name>
    <dbReference type="NCBI Taxonomy" id="572264"/>
    <lineage>
        <taxon>Bacteria</taxon>
        <taxon>Bacillati</taxon>
        <taxon>Bacillota</taxon>
        <taxon>Bacilli</taxon>
        <taxon>Bacillales</taxon>
        <taxon>Bacillaceae</taxon>
        <taxon>Bacillus</taxon>
        <taxon>Bacillus cereus group</taxon>
    </lineage>
</organism>
<gene>
    <name evidence="1" type="primary">dsdA</name>
    <name type="ordered locus">BCA_1793</name>
</gene>
<comment type="catalytic activity">
    <reaction evidence="1">
        <text>D-serine = pyruvate + NH4(+)</text>
        <dbReference type="Rhea" id="RHEA:13977"/>
        <dbReference type="ChEBI" id="CHEBI:15361"/>
        <dbReference type="ChEBI" id="CHEBI:28938"/>
        <dbReference type="ChEBI" id="CHEBI:35247"/>
        <dbReference type="EC" id="4.3.1.18"/>
    </reaction>
</comment>
<comment type="cofactor">
    <cofactor evidence="1">
        <name>pyridoxal 5'-phosphate</name>
        <dbReference type="ChEBI" id="CHEBI:597326"/>
    </cofactor>
</comment>
<comment type="similarity">
    <text evidence="1">Belongs to the serine/threonine dehydratase family. DsdA subfamily.</text>
</comment>
<feature type="chain" id="PRO_1000149385" description="Probable D-serine dehydratase">
    <location>
        <begin position="1"/>
        <end position="446"/>
    </location>
</feature>
<feature type="modified residue" description="N6-(pyridoxal phosphate)lysine" evidence="1">
    <location>
        <position position="116"/>
    </location>
</feature>
<reference key="1">
    <citation type="submission" date="2009-02" db="EMBL/GenBank/DDBJ databases">
        <title>Genome sequence of Bacillus cereus 03BB102.</title>
        <authorList>
            <person name="Dodson R.J."/>
            <person name="Jackson P."/>
            <person name="Munk A.C."/>
            <person name="Brettin T."/>
            <person name="Bruce D."/>
            <person name="Detter C."/>
            <person name="Tapia R."/>
            <person name="Han C."/>
            <person name="Sutton G."/>
            <person name="Sims D."/>
        </authorList>
    </citation>
    <scope>NUCLEOTIDE SEQUENCE [LARGE SCALE GENOMIC DNA]</scope>
    <source>
        <strain>03BB102</strain>
    </source>
</reference>